<organism evidence="10">
    <name type="scientific">Aspergillus flavus (strain ATCC 200026 / FGSC A1120 / IAM 13836 / NRRL 3357 / JCM 12722 / SRRC 167)</name>
    <dbReference type="NCBI Taxonomy" id="332952"/>
    <lineage>
        <taxon>Eukaryota</taxon>
        <taxon>Fungi</taxon>
        <taxon>Dikarya</taxon>
        <taxon>Ascomycota</taxon>
        <taxon>Pezizomycotina</taxon>
        <taxon>Eurotiomycetes</taxon>
        <taxon>Eurotiomycetidae</taxon>
        <taxon>Eurotiales</taxon>
        <taxon>Aspergillaceae</taxon>
        <taxon>Aspergillus</taxon>
        <taxon>Aspergillus subgen. Circumdati</taxon>
    </lineage>
</organism>
<dbReference type="EC" id="3.1.3.16" evidence="5"/>
<dbReference type="EMBL" id="CP044619">
    <property type="protein sequence ID" value="QRD88625.1"/>
    <property type="molecule type" value="Genomic_DNA"/>
</dbReference>
<dbReference type="VEuPathDB" id="FungiDB:AFLA_004429"/>
<dbReference type="VEuPathDB" id="FungiDB:F9C07_2102428"/>
<dbReference type="Proteomes" id="UP000596276">
    <property type="component" value="Chromosome 1"/>
</dbReference>
<dbReference type="GO" id="GO:0005737">
    <property type="term" value="C:cytoplasm"/>
    <property type="evidence" value="ECO:0000314"/>
    <property type="project" value="UniProtKB"/>
</dbReference>
<dbReference type="GO" id="GO:0005634">
    <property type="term" value="C:nucleus"/>
    <property type="evidence" value="ECO:0000314"/>
    <property type="project" value="UniProtKB"/>
</dbReference>
<dbReference type="GO" id="GO:0046872">
    <property type="term" value="F:metal ion binding"/>
    <property type="evidence" value="ECO:0007669"/>
    <property type="project" value="UniProtKB-KW"/>
</dbReference>
<dbReference type="GO" id="GO:0004722">
    <property type="term" value="F:protein serine/threonine phosphatase activity"/>
    <property type="evidence" value="ECO:0000314"/>
    <property type="project" value="UniProtKB"/>
</dbReference>
<dbReference type="GO" id="GO:1903215">
    <property type="term" value="P:negative regulation of protein targeting to mitochondrion"/>
    <property type="evidence" value="ECO:0000315"/>
    <property type="project" value="UniProtKB"/>
</dbReference>
<dbReference type="CDD" id="cd00143">
    <property type="entry name" value="PP2Cc"/>
    <property type="match status" value="1"/>
</dbReference>
<dbReference type="FunFam" id="3.60.40.10:FF:000016">
    <property type="entry name" value="Protein phosphatase 2C"/>
    <property type="match status" value="1"/>
</dbReference>
<dbReference type="Gene3D" id="3.60.40.10">
    <property type="entry name" value="PPM-type phosphatase domain"/>
    <property type="match status" value="1"/>
</dbReference>
<dbReference type="InterPro" id="IPR015655">
    <property type="entry name" value="PP2C"/>
</dbReference>
<dbReference type="InterPro" id="IPR000222">
    <property type="entry name" value="PP2C_BS"/>
</dbReference>
<dbReference type="InterPro" id="IPR036457">
    <property type="entry name" value="PPM-type-like_dom_sf"/>
</dbReference>
<dbReference type="InterPro" id="IPR001932">
    <property type="entry name" value="PPM-type_phosphatase-like_dom"/>
</dbReference>
<dbReference type="PANTHER" id="PTHR13832:SF565">
    <property type="entry name" value="AT28366P-RELATED"/>
    <property type="match status" value="1"/>
</dbReference>
<dbReference type="PANTHER" id="PTHR13832">
    <property type="entry name" value="PROTEIN PHOSPHATASE 2C"/>
    <property type="match status" value="1"/>
</dbReference>
<dbReference type="Pfam" id="PF00481">
    <property type="entry name" value="PP2C"/>
    <property type="match status" value="1"/>
</dbReference>
<dbReference type="SMART" id="SM00331">
    <property type="entry name" value="PP2C_SIG"/>
    <property type="match status" value="1"/>
</dbReference>
<dbReference type="SMART" id="SM00332">
    <property type="entry name" value="PP2Cc"/>
    <property type="match status" value="1"/>
</dbReference>
<dbReference type="SUPFAM" id="SSF81606">
    <property type="entry name" value="PP2C-like"/>
    <property type="match status" value="1"/>
</dbReference>
<dbReference type="PROSITE" id="PS01032">
    <property type="entry name" value="PPM_1"/>
    <property type="match status" value="1"/>
</dbReference>
<dbReference type="PROSITE" id="PS51746">
    <property type="entry name" value="PPM_2"/>
    <property type="match status" value="1"/>
</dbReference>
<reference evidence="10" key="1">
    <citation type="journal article" date="2021" name="G3 (Bethesda)">
        <title>Chromosome assembled and annotated genome sequence of Aspergillus flavus NRRL 3357.</title>
        <authorList>
            <person name="Skerker J.M."/>
            <person name="Pianalto K.M."/>
            <person name="Mondo S.J."/>
            <person name="Yang K."/>
            <person name="Arkin A.P."/>
            <person name="Keller N.P."/>
            <person name="Grigoriev I.V."/>
            <person name="Glass N.L."/>
        </authorList>
    </citation>
    <scope>NUCLEOTIDE SEQUENCE [LARGE SCALE GENOMIC DNA]</scope>
    <source>
        <strain evidence="10">ATCC 200026 / FGSC A1120 / IAM 13836 / NRRL 3357 / JCM 12722 / SRRC 167</strain>
    </source>
</reference>
<reference evidence="7" key="2">
    <citation type="journal article" date="2023" name="MBio">
        <title>PP2C phosphatases Ptc1 and Ptc2 dephosphorylate PGK1 to regulate autophagy and aflatoxin synthesis in the pathogenic fungus Aspergillus flavus.</title>
        <authorList>
            <person name="Zhu Z."/>
            <person name="Yang M."/>
            <person name="Yang G."/>
            <person name="Zhang B."/>
            <person name="Cao X."/>
            <person name="Yuan J."/>
            <person name="Ge F."/>
            <person name="Wang S."/>
        </authorList>
    </citation>
    <scope>FUNCTION</scope>
    <scope>CATALYTIC ACTIVITY</scope>
    <scope>COFACTOR</scope>
    <scope>SUBCELLULAR LOCATION</scope>
    <scope>DISRUPTION PHENOTYPE</scope>
    <scope>MUTAGENESIS OF ASP-71; ASP-148 AND ASP-240</scope>
</reference>
<feature type="chain" id="PRO_0000461657" description="Protein phosphatase 2C homolog 2">
    <location>
        <begin position="1"/>
        <end position="435"/>
    </location>
</feature>
<feature type="domain" description="PPM-type phosphatase" evidence="3">
    <location>
        <begin position="23"/>
        <end position="298"/>
    </location>
</feature>
<feature type="region of interest" description="Disordered" evidence="4">
    <location>
        <begin position="366"/>
        <end position="435"/>
    </location>
</feature>
<feature type="compositionally biased region" description="Basic and acidic residues" evidence="4">
    <location>
        <begin position="381"/>
        <end position="392"/>
    </location>
</feature>
<feature type="compositionally biased region" description="Low complexity" evidence="4">
    <location>
        <begin position="409"/>
        <end position="418"/>
    </location>
</feature>
<feature type="compositionally biased region" description="Polar residues" evidence="4">
    <location>
        <begin position="419"/>
        <end position="435"/>
    </location>
</feature>
<feature type="binding site" evidence="1">
    <location>
        <position position="71"/>
    </location>
    <ligand>
        <name>Mn(2+)</name>
        <dbReference type="ChEBI" id="CHEBI:29035"/>
        <label>1</label>
    </ligand>
</feature>
<feature type="binding site" evidence="1">
    <location>
        <position position="71"/>
    </location>
    <ligand>
        <name>Mn(2+)</name>
        <dbReference type="ChEBI" id="CHEBI:29035"/>
        <label>2</label>
    </ligand>
</feature>
<feature type="binding site" evidence="1">
    <location>
        <position position="72"/>
    </location>
    <ligand>
        <name>Mn(2+)</name>
        <dbReference type="ChEBI" id="CHEBI:29035"/>
        <label>1</label>
    </ligand>
</feature>
<feature type="binding site" evidence="1">
    <location>
        <position position="240"/>
    </location>
    <ligand>
        <name>Mn(2+)</name>
        <dbReference type="ChEBI" id="CHEBI:29035"/>
        <label>2</label>
    </ligand>
</feature>
<feature type="binding site" evidence="1">
    <location>
        <position position="289"/>
    </location>
    <ligand>
        <name>Mn(2+)</name>
        <dbReference type="ChEBI" id="CHEBI:29035"/>
        <label>2</label>
    </ligand>
</feature>
<feature type="mutagenesis site" description="Decreases activity." evidence="5">
    <original>D</original>
    <variation>A</variation>
    <location>
        <position position="71"/>
    </location>
</feature>
<feature type="mutagenesis site" description="Decreases activity." evidence="5">
    <original>D</original>
    <variation>A</variation>
    <location>
        <position position="148"/>
    </location>
</feature>
<feature type="mutagenesis site" description="Decreases activity." evidence="5">
    <original>D</original>
    <variation>A</variation>
    <location>
        <position position="240"/>
    </location>
</feature>
<keyword id="KW-0963">Cytoplasm</keyword>
<keyword id="KW-0378">Hydrolase</keyword>
<keyword id="KW-0460">Magnesium</keyword>
<keyword id="KW-0464">Manganese</keyword>
<keyword id="KW-0479">Metal-binding</keyword>
<keyword id="KW-0539">Nucleus</keyword>
<keyword id="KW-0904">Protein phosphatase</keyword>
<keyword id="KW-1185">Reference proteome</keyword>
<comment type="function">
    <text evidence="2 5">Dephosphorylating regulator for many key proteins (By similarity). Dephosphorylates phosphoglycerate kinase pgk1 at least on 'Ser-203' to negatively regulate targeting of pgk1 to the mitochondrion, thereby negatively regulating production of acetyl-CoA and consequently aflatoxin biosynthesis (PubMed:37754565).</text>
</comment>
<comment type="catalytic activity">
    <reaction evidence="5">
        <text>O-phospho-L-seryl-[protein] + H2O = L-seryl-[protein] + phosphate</text>
        <dbReference type="Rhea" id="RHEA:20629"/>
        <dbReference type="Rhea" id="RHEA-COMP:9863"/>
        <dbReference type="Rhea" id="RHEA-COMP:11604"/>
        <dbReference type="ChEBI" id="CHEBI:15377"/>
        <dbReference type="ChEBI" id="CHEBI:29999"/>
        <dbReference type="ChEBI" id="CHEBI:43474"/>
        <dbReference type="ChEBI" id="CHEBI:83421"/>
        <dbReference type="EC" id="3.1.3.16"/>
    </reaction>
    <physiologicalReaction direction="left-to-right" evidence="5">
        <dbReference type="Rhea" id="RHEA:20630"/>
    </physiologicalReaction>
</comment>
<comment type="catalytic activity">
    <reaction evidence="8">
        <text>O-phospho-L-threonyl-[protein] + H2O = L-threonyl-[protein] + phosphate</text>
        <dbReference type="Rhea" id="RHEA:47004"/>
        <dbReference type="Rhea" id="RHEA-COMP:11060"/>
        <dbReference type="Rhea" id="RHEA-COMP:11605"/>
        <dbReference type="ChEBI" id="CHEBI:15377"/>
        <dbReference type="ChEBI" id="CHEBI:30013"/>
        <dbReference type="ChEBI" id="CHEBI:43474"/>
        <dbReference type="ChEBI" id="CHEBI:61977"/>
        <dbReference type="EC" id="3.1.3.16"/>
    </reaction>
    <physiologicalReaction direction="left-to-right" evidence="8">
        <dbReference type="Rhea" id="RHEA:47005"/>
    </physiologicalReaction>
</comment>
<comment type="cofactor">
    <cofactor evidence="5">
        <name>Mg(2+)</name>
        <dbReference type="ChEBI" id="CHEBI:18420"/>
    </cofactor>
    <cofactor evidence="5">
        <name>Mn(2+)</name>
        <dbReference type="ChEBI" id="CHEBI:29035"/>
    </cofactor>
    <text evidence="3 5">Binds 2 magnesium or manganese ions per subunit (By similarity). Has highest activity with magnesium, but also has activity with calcium (PubMed:37754565).</text>
</comment>
<comment type="subcellular location">
    <subcellularLocation>
        <location evidence="5">Cytoplasm</location>
    </subcellularLocation>
    <subcellularLocation>
        <location evidence="5">Nucleus</location>
    </subcellularLocation>
    <text evidence="5">Nuclear following induction of autophagy and DNA damage.</text>
</comment>
<comment type="disruption phenotype">
    <text evidence="5">Increases phosphorylation and mitochondrial localization of pgk1 (PubMed:37754565). Decreases formation of autophagic vesicles (PubMed:37754565). Decreases conidia formation and aflatoxin production and reduces virulence on maize and peanut; double knockout with ptc1 exacerbates the effect and also leads to decreased colony growth (PubMed:37754565). Abolishes sclerotia formation (PubMed:37754565).</text>
</comment>
<comment type="similarity">
    <text evidence="7">Belongs to the PP2C family.</text>
</comment>
<sequence length="435" mass="46987">MGQTLSEPVVDKTSSEGEDDCCIYGVSAMQGWRISMEDAHAAVLDLHAKYTSPEETSTDPAKRLAFFGVYDGHGGDKVALFAGENVHKIVAKQDSFAKGDIEQALKDGFLATDRAILEDPKYEEEVSGCTAAVSVISKHKIWVANAGDSRSVLGVKGRAKPLSFDHKPQNEGEKARISAAGGFVDFGRVNGNLALSRAIGDFEFKKSPELAPEQQIVTAYPDVTVHELSDDDEFLVIACDGIWDCQSSQAVVEFVRRGIAAKQELYRICENMMDNCLASNSETGGVGCDNMTMIIIGLLNGRTKEECGDAAEFRGPGIRNQFEENPDDYDMENDRARGFSVRSGRIILLGDGTELVPDQNDEELFDQTEEDRDLPSQVQRELPDSARNEREGTPGPQSKTDATSKSEEGSSASTSESTVTPAGSSTSGAPEKSTS</sequence>
<protein>
    <recommendedName>
        <fullName evidence="6">Protein phosphatase 2C homolog 2</fullName>
        <shortName evidence="7">PP2C-2</shortName>
        <ecNumber evidence="5">3.1.3.16</ecNumber>
    </recommendedName>
</protein>
<accession>A0A7U2MSD6</accession>
<evidence type="ECO:0000250" key="1">
    <source>
        <dbReference type="UniProtKB" id="P35813"/>
    </source>
</evidence>
<evidence type="ECO:0000250" key="2">
    <source>
        <dbReference type="UniProtKB" id="P39966"/>
    </source>
</evidence>
<evidence type="ECO:0000255" key="3">
    <source>
        <dbReference type="PROSITE-ProRule" id="PRU01082"/>
    </source>
</evidence>
<evidence type="ECO:0000256" key="4">
    <source>
        <dbReference type="SAM" id="MobiDB-lite"/>
    </source>
</evidence>
<evidence type="ECO:0000269" key="5">
    <source>
    </source>
</evidence>
<evidence type="ECO:0000303" key="6">
    <source>
    </source>
</evidence>
<evidence type="ECO:0000305" key="7"/>
<evidence type="ECO:0000305" key="8">
    <source>
    </source>
</evidence>
<evidence type="ECO:0000312" key="9">
    <source>
        <dbReference type="EMBL" id="QRD88625.1"/>
    </source>
</evidence>
<evidence type="ECO:0000312" key="10">
    <source>
        <dbReference type="Proteomes" id="UP000596276"/>
    </source>
</evidence>
<name>PP2C2_ASPFN</name>
<gene>
    <name evidence="6" type="primary">ptc2</name>
    <name evidence="9" type="ORF">F9C07_2102428</name>
</gene>
<proteinExistence type="evidence at protein level"/>